<reference key="1">
    <citation type="journal article" date="2008" name="J. Bacteriol.">
        <title>The complete genome sequence of Escherichia coli DH10B: insights into the biology of a laboratory workhorse.</title>
        <authorList>
            <person name="Durfee T."/>
            <person name="Nelson R."/>
            <person name="Baldwin S."/>
            <person name="Plunkett G. III"/>
            <person name="Burland V."/>
            <person name="Mau B."/>
            <person name="Petrosino J.F."/>
            <person name="Qin X."/>
            <person name="Muzny D.M."/>
            <person name="Ayele M."/>
            <person name="Gibbs R.A."/>
            <person name="Csorgo B."/>
            <person name="Posfai G."/>
            <person name="Weinstock G.M."/>
            <person name="Blattner F.R."/>
        </authorList>
    </citation>
    <scope>NUCLEOTIDE SEQUENCE [LARGE SCALE GENOMIC DNA]</scope>
    <source>
        <strain>K12 / DH10B</strain>
    </source>
</reference>
<comment type="function">
    <text evidence="1">Conversion of NADPH, generated by peripheral catabolic pathways, to NADH, which can enter the respiratory chain for energy generation.</text>
</comment>
<comment type="catalytic activity">
    <reaction evidence="1">
        <text>NAD(+) + NADPH = NADH + NADP(+)</text>
        <dbReference type="Rhea" id="RHEA:11692"/>
        <dbReference type="ChEBI" id="CHEBI:57540"/>
        <dbReference type="ChEBI" id="CHEBI:57783"/>
        <dbReference type="ChEBI" id="CHEBI:57945"/>
        <dbReference type="ChEBI" id="CHEBI:58349"/>
        <dbReference type="EC" id="1.6.1.1"/>
    </reaction>
</comment>
<comment type="cofactor">
    <cofactor evidence="1">
        <name>FAD</name>
        <dbReference type="ChEBI" id="CHEBI:57692"/>
    </cofactor>
    <text evidence="1">Binds 1 FAD per subunit.</text>
</comment>
<comment type="subcellular location">
    <subcellularLocation>
        <location evidence="1">Cytoplasm</location>
    </subcellularLocation>
</comment>
<comment type="similarity">
    <text evidence="1">Belongs to the class-I pyridine nucleotide-disulfide oxidoreductase family.</text>
</comment>
<proteinExistence type="inferred from homology"/>
<gene>
    <name evidence="1" type="primary">sthA</name>
    <name evidence="1" type="synonym">udhA</name>
    <name type="ordered locus">ECDH10B_4151</name>
</gene>
<feature type="chain" id="PRO_1000100853" description="Soluble pyridine nucleotide transhydrogenase">
    <location>
        <begin position="1"/>
        <end position="466"/>
    </location>
</feature>
<feature type="binding site" evidence="1">
    <location>
        <begin position="36"/>
        <end position="45"/>
    </location>
    <ligand>
        <name>FAD</name>
        <dbReference type="ChEBI" id="CHEBI:57692"/>
    </ligand>
</feature>
<keyword id="KW-0963">Cytoplasm</keyword>
<keyword id="KW-0274">FAD</keyword>
<keyword id="KW-0285">Flavoprotein</keyword>
<keyword id="KW-0520">NAD</keyword>
<keyword id="KW-0521">NADP</keyword>
<keyword id="KW-0560">Oxidoreductase</keyword>
<dbReference type="EC" id="1.6.1.1" evidence="1"/>
<dbReference type="EMBL" id="CP000948">
    <property type="protein sequence ID" value="ACB04973.1"/>
    <property type="molecule type" value="Genomic_DNA"/>
</dbReference>
<dbReference type="RefSeq" id="WP_001120810.1">
    <property type="nucleotide sequence ID" value="NC_010473.1"/>
</dbReference>
<dbReference type="SMR" id="B1XBX3"/>
<dbReference type="GeneID" id="75203206"/>
<dbReference type="KEGG" id="ecd:ECDH10B_4151"/>
<dbReference type="HOGENOM" id="CLU_016755_0_0_6"/>
<dbReference type="GO" id="GO:0005829">
    <property type="term" value="C:cytosol"/>
    <property type="evidence" value="ECO:0007669"/>
    <property type="project" value="TreeGrafter"/>
</dbReference>
<dbReference type="GO" id="GO:0004148">
    <property type="term" value="F:dihydrolipoyl dehydrogenase (NADH) activity"/>
    <property type="evidence" value="ECO:0007669"/>
    <property type="project" value="TreeGrafter"/>
</dbReference>
<dbReference type="GO" id="GO:0050660">
    <property type="term" value="F:flavin adenine dinucleotide binding"/>
    <property type="evidence" value="ECO:0007669"/>
    <property type="project" value="TreeGrafter"/>
</dbReference>
<dbReference type="GO" id="GO:0003957">
    <property type="term" value="F:NAD(P)+ transhydrogenase (Si-specific) activity"/>
    <property type="evidence" value="ECO:0007669"/>
    <property type="project" value="UniProtKB-UniRule"/>
</dbReference>
<dbReference type="GO" id="GO:0006103">
    <property type="term" value="P:2-oxoglutarate metabolic process"/>
    <property type="evidence" value="ECO:0007669"/>
    <property type="project" value="TreeGrafter"/>
</dbReference>
<dbReference type="GO" id="GO:0006739">
    <property type="term" value="P:NADP metabolic process"/>
    <property type="evidence" value="ECO:0007669"/>
    <property type="project" value="UniProtKB-UniRule"/>
</dbReference>
<dbReference type="FunFam" id="3.30.390.30:FF:000002">
    <property type="entry name" value="Soluble pyridine nucleotide transhydrogenase"/>
    <property type="match status" value="1"/>
</dbReference>
<dbReference type="FunFam" id="3.50.50.60:FF:000008">
    <property type="entry name" value="Soluble pyridine nucleotide transhydrogenase"/>
    <property type="match status" value="1"/>
</dbReference>
<dbReference type="Gene3D" id="3.30.390.30">
    <property type="match status" value="1"/>
</dbReference>
<dbReference type="Gene3D" id="3.50.50.60">
    <property type="entry name" value="FAD/NAD(P)-binding domain"/>
    <property type="match status" value="2"/>
</dbReference>
<dbReference type="HAMAP" id="MF_00247">
    <property type="entry name" value="SthA"/>
    <property type="match status" value="1"/>
</dbReference>
<dbReference type="InterPro" id="IPR050151">
    <property type="entry name" value="Class-I_Pyr_Nuc-Dis_Oxidored"/>
</dbReference>
<dbReference type="InterPro" id="IPR036188">
    <property type="entry name" value="FAD/NAD-bd_sf"/>
</dbReference>
<dbReference type="InterPro" id="IPR023753">
    <property type="entry name" value="FAD/NAD-binding_dom"/>
</dbReference>
<dbReference type="InterPro" id="IPR016156">
    <property type="entry name" value="FAD/NAD-linked_Rdtase_dimer_sf"/>
</dbReference>
<dbReference type="InterPro" id="IPR001100">
    <property type="entry name" value="Pyr_nuc-diS_OxRdtase"/>
</dbReference>
<dbReference type="InterPro" id="IPR004099">
    <property type="entry name" value="Pyr_nucl-diS_OxRdtase_dimer"/>
</dbReference>
<dbReference type="InterPro" id="IPR022962">
    <property type="entry name" value="STH_gammaproteobact"/>
</dbReference>
<dbReference type="NCBIfam" id="NF003585">
    <property type="entry name" value="PRK05249.1"/>
    <property type="match status" value="1"/>
</dbReference>
<dbReference type="PANTHER" id="PTHR22912">
    <property type="entry name" value="DISULFIDE OXIDOREDUCTASE"/>
    <property type="match status" value="1"/>
</dbReference>
<dbReference type="PANTHER" id="PTHR22912:SF93">
    <property type="entry name" value="SOLUBLE PYRIDINE NUCLEOTIDE TRANSHYDROGENASE"/>
    <property type="match status" value="1"/>
</dbReference>
<dbReference type="Pfam" id="PF07992">
    <property type="entry name" value="Pyr_redox_2"/>
    <property type="match status" value="1"/>
</dbReference>
<dbReference type="Pfam" id="PF02852">
    <property type="entry name" value="Pyr_redox_dim"/>
    <property type="match status" value="1"/>
</dbReference>
<dbReference type="PIRSF" id="PIRSF000350">
    <property type="entry name" value="Mercury_reductase_MerA"/>
    <property type="match status" value="1"/>
</dbReference>
<dbReference type="PRINTS" id="PR00368">
    <property type="entry name" value="FADPNR"/>
</dbReference>
<dbReference type="PRINTS" id="PR00411">
    <property type="entry name" value="PNDRDTASEI"/>
</dbReference>
<dbReference type="SUPFAM" id="SSF51905">
    <property type="entry name" value="FAD/NAD(P)-binding domain"/>
    <property type="match status" value="1"/>
</dbReference>
<dbReference type="SUPFAM" id="SSF55424">
    <property type="entry name" value="FAD/NAD-linked reductases, dimerisation (C-terminal) domain"/>
    <property type="match status" value="1"/>
</dbReference>
<evidence type="ECO:0000255" key="1">
    <source>
        <dbReference type="HAMAP-Rule" id="MF_00247"/>
    </source>
</evidence>
<name>STHA_ECODH</name>
<organism>
    <name type="scientific">Escherichia coli (strain K12 / DH10B)</name>
    <dbReference type="NCBI Taxonomy" id="316385"/>
    <lineage>
        <taxon>Bacteria</taxon>
        <taxon>Pseudomonadati</taxon>
        <taxon>Pseudomonadota</taxon>
        <taxon>Gammaproteobacteria</taxon>
        <taxon>Enterobacterales</taxon>
        <taxon>Enterobacteriaceae</taxon>
        <taxon>Escherichia</taxon>
    </lineage>
</organism>
<accession>B1XBX3</accession>
<protein>
    <recommendedName>
        <fullName evidence="1">Soluble pyridine nucleotide transhydrogenase</fullName>
        <shortName evidence="1">STH</shortName>
        <ecNumber evidence="1">1.6.1.1</ecNumber>
    </recommendedName>
    <alternativeName>
        <fullName evidence="1">NAD(P)(+) transhydrogenase [B-specific]</fullName>
    </alternativeName>
</protein>
<sequence length="466" mass="51560">MPHSYDYDAIVIGSGPGGEGAAMGLVKQGARVAVIERYQNVGGGCTHWGTIPSKALRHAVSRIIEFNQNPLYSDHSRLLRSSFADILNHADNVINQQTRMRQGFYERNHCEILQGNARFVDEHTLALDCPDGSVETLTAEKFVIACGSRPYHPTDVDFTHPRIYDSDSILSMHHEPRHVLIYGAGVIGCEYASIFRGMDVKVDLINTRDRLLAFLDQEMSDSLSYHFWNSGVVIRHNEEYEKIEGCDDGVIMHLKSGKKLKADCLLYANGRTGNTDSLALQNIGLETDSRGQLKVNSMYQTAQPHVYAVGDVIGYPSLASAAYDQGRIAAQALVKGEATAHLIEDIPTGIYTIPEISSVGKTEQQLTAMKVPYEVGRAQFKHLARAQIVGMNVGTLKILFHRETKEILGIHCFGERAAEIIHIGQAIMEQKGGGNTIEYFVNTTFNYPTMAEAYRVAALNGLNRLF</sequence>